<reference key="1">
    <citation type="journal article" date="2006" name="J. Bacteriol.">
        <title>Comparison of the genome sequence of the poultry pathogen Bordetella avium with those of B. bronchiseptica, B. pertussis, and B. parapertussis reveals extensive diversity in surface structures associated with host interaction.</title>
        <authorList>
            <person name="Sebaihia M."/>
            <person name="Preston A."/>
            <person name="Maskell D.J."/>
            <person name="Kuzmiak H."/>
            <person name="Connell T.D."/>
            <person name="King N.D."/>
            <person name="Orndorff P.E."/>
            <person name="Miyamoto D.M."/>
            <person name="Thomson N.R."/>
            <person name="Harris D."/>
            <person name="Goble A."/>
            <person name="Lord A."/>
            <person name="Murphy L."/>
            <person name="Quail M.A."/>
            <person name="Rutter S."/>
            <person name="Squares R."/>
            <person name="Squares S."/>
            <person name="Woodward J."/>
            <person name="Parkhill J."/>
            <person name="Temple L.M."/>
        </authorList>
    </citation>
    <scope>NUCLEOTIDE SEQUENCE [LARGE SCALE GENOMIC DNA]</scope>
    <source>
        <strain>197N</strain>
    </source>
</reference>
<dbReference type="EC" id="7.1.1.-" evidence="1"/>
<dbReference type="EMBL" id="AM167904">
    <property type="protein sequence ID" value="CAJ48653.1"/>
    <property type="molecule type" value="Genomic_DNA"/>
</dbReference>
<dbReference type="RefSeq" id="WP_012416728.1">
    <property type="nucleotide sequence ID" value="NC_010645.1"/>
</dbReference>
<dbReference type="SMR" id="Q2KV11"/>
<dbReference type="STRING" id="360910.BAV1044"/>
<dbReference type="GeneID" id="92935762"/>
<dbReference type="KEGG" id="bav:BAV1044"/>
<dbReference type="eggNOG" id="COG0852">
    <property type="taxonomic scope" value="Bacteria"/>
</dbReference>
<dbReference type="HOGENOM" id="CLU_042628_2_1_4"/>
<dbReference type="OrthoDB" id="9803286at2"/>
<dbReference type="Proteomes" id="UP000001977">
    <property type="component" value="Chromosome"/>
</dbReference>
<dbReference type="GO" id="GO:0005886">
    <property type="term" value="C:plasma membrane"/>
    <property type="evidence" value="ECO:0007669"/>
    <property type="project" value="UniProtKB-SubCell"/>
</dbReference>
<dbReference type="GO" id="GO:0008137">
    <property type="term" value="F:NADH dehydrogenase (ubiquinone) activity"/>
    <property type="evidence" value="ECO:0007669"/>
    <property type="project" value="InterPro"/>
</dbReference>
<dbReference type="GO" id="GO:0050136">
    <property type="term" value="F:NADH:ubiquinone reductase (non-electrogenic) activity"/>
    <property type="evidence" value="ECO:0007669"/>
    <property type="project" value="UniProtKB-UniRule"/>
</dbReference>
<dbReference type="GO" id="GO:0048038">
    <property type="term" value="F:quinone binding"/>
    <property type="evidence" value="ECO:0007669"/>
    <property type="project" value="UniProtKB-KW"/>
</dbReference>
<dbReference type="Gene3D" id="3.30.460.80">
    <property type="entry name" value="NADH:ubiquinone oxidoreductase, 30kDa subunit"/>
    <property type="match status" value="1"/>
</dbReference>
<dbReference type="HAMAP" id="MF_01357">
    <property type="entry name" value="NDH1_NuoC"/>
    <property type="match status" value="1"/>
</dbReference>
<dbReference type="InterPro" id="IPR010218">
    <property type="entry name" value="NADH_DH_suC"/>
</dbReference>
<dbReference type="InterPro" id="IPR037232">
    <property type="entry name" value="NADH_quin_OxRdtase_su_C/D-like"/>
</dbReference>
<dbReference type="InterPro" id="IPR001268">
    <property type="entry name" value="NADH_UbQ_OxRdtase_30kDa_su"/>
</dbReference>
<dbReference type="InterPro" id="IPR020396">
    <property type="entry name" value="NADH_UbQ_OxRdtase_CS"/>
</dbReference>
<dbReference type="NCBIfam" id="TIGR01961">
    <property type="entry name" value="NuoC_fam"/>
    <property type="match status" value="1"/>
</dbReference>
<dbReference type="NCBIfam" id="NF004730">
    <property type="entry name" value="PRK06074.1-1"/>
    <property type="match status" value="1"/>
</dbReference>
<dbReference type="PANTHER" id="PTHR10884:SF14">
    <property type="entry name" value="NADH DEHYDROGENASE [UBIQUINONE] IRON-SULFUR PROTEIN 3, MITOCHONDRIAL"/>
    <property type="match status" value="1"/>
</dbReference>
<dbReference type="PANTHER" id="PTHR10884">
    <property type="entry name" value="NADH DEHYDROGENASE UBIQUINONE IRON-SULFUR PROTEIN 3"/>
    <property type="match status" value="1"/>
</dbReference>
<dbReference type="Pfam" id="PF00329">
    <property type="entry name" value="Complex1_30kDa"/>
    <property type="match status" value="1"/>
</dbReference>
<dbReference type="SUPFAM" id="SSF143243">
    <property type="entry name" value="Nqo5-like"/>
    <property type="match status" value="1"/>
</dbReference>
<dbReference type="PROSITE" id="PS00542">
    <property type="entry name" value="COMPLEX1_30K"/>
    <property type="match status" value="1"/>
</dbReference>
<feature type="chain" id="PRO_0000358045" description="NADH-quinone oxidoreductase subunit C">
    <location>
        <begin position="1"/>
        <end position="206"/>
    </location>
</feature>
<name>NUOC_BORA1</name>
<evidence type="ECO:0000255" key="1">
    <source>
        <dbReference type="HAMAP-Rule" id="MF_01357"/>
    </source>
</evidence>
<protein>
    <recommendedName>
        <fullName evidence="1">NADH-quinone oxidoreductase subunit C</fullName>
        <ecNumber evidence="1">7.1.1.-</ecNumber>
    </recommendedName>
    <alternativeName>
        <fullName evidence="1">NADH dehydrogenase I subunit C</fullName>
    </alternativeName>
    <alternativeName>
        <fullName evidence="1">NDH-1 subunit C</fullName>
    </alternativeName>
</protein>
<keyword id="KW-0997">Cell inner membrane</keyword>
<keyword id="KW-1003">Cell membrane</keyword>
<keyword id="KW-0472">Membrane</keyword>
<keyword id="KW-0520">NAD</keyword>
<keyword id="KW-0874">Quinone</keyword>
<keyword id="KW-1185">Reference proteome</keyword>
<keyword id="KW-1278">Translocase</keyword>
<keyword id="KW-0813">Transport</keyword>
<keyword id="KW-0830">Ubiquinone</keyword>
<sequence length="206" mass="23728">MMTRLETLKNNLQATLGQDIALTEALGELTLEVPADQWLTVCNKLRTDAGLRFESCIDLCGMDYQTWGDGSHANAHDEPARPGRFAVVIHLLSIEHNWRLRVRTYAVDEEFPIVASLIECWPGVNWYEREAFDLYGIVFEGHPDLRRILTDYGFIGHPFRKDFPLSGTVEMRYDPEQKRVIYQPVTIDPREITPRIVRESSYGMGR</sequence>
<gene>
    <name evidence="1" type="primary">nuoC</name>
    <name type="ordered locus">BAV1044</name>
</gene>
<comment type="function">
    <text evidence="1">NDH-1 shuttles electrons from NADH, via FMN and iron-sulfur (Fe-S) centers, to quinones in the respiratory chain. The immediate electron acceptor for the enzyme in this species is believed to be ubiquinone. Couples the redox reaction to proton translocation (for every two electrons transferred, four hydrogen ions are translocated across the cytoplasmic membrane), and thus conserves the redox energy in a proton gradient.</text>
</comment>
<comment type="catalytic activity">
    <reaction evidence="1">
        <text>a quinone + NADH + 5 H(+)(in) = a quinol + NAD(+) + 4 H(+)(out)</text>
        <dbReference type="Rhea" id="RHEA:57888"/>
        <dbReference type="ChEBI" id="CHEBI:15378"/>
        <dbReference type="ChEBI" id="CHEBI:24646"/>
        <dbReference type="ChEBI" id="CHEBI:57540"/>
        <dbReference type="ChEBI" id="CHEBI:57945"/>
        <dbReference type="ChEBI" id="CHEBI:132124"/>
    </reaction>
</comment>
<comment type="subunit">
    <text evidence="1">NDH-1 is composed of 14 different subunits. Subunits NuoB, C, D, E, F, and G constitute the peripheral sector of the complex.</text>
</comment>
<comment type="subcellular location">
    <subcellularLocation>
        <location evidence="1">Cell inner membrane</location>
        <topology evidence="1">Peripheral membrane protein</topology>
        <orientation evidence="1">Cytoplasmic side</orientation>
    </subcellularLocation>
</comment>
<comment type="similarity">
    <text evidence="1">Belongs to the complex I 30 kDa subunit family.</text>
</comment>
<accession>Q2KV11</accession>
<organism>
    <name type="scientific">Bordetella avium (strain 197N)</name>
    <dbReference type="NCBI Taxonomy" id="360910"/>
    <lineage>
        <taxon>Bacteria</taxon>
        <taxon>Pseudomonadati</taxon>
        <taxon>Pseudomonadota</taxon>
        <taxon>Betaproteobacteria</taxon>
        <taxon>Burkholderiales</taxon>
        <taxon>Alcaligenaceae</taxon>
        <taxon>Bordetella</taxon>
    </lineage>
</organism>
<proteinExistence type="inferred from homology"/>